<evidence type="ECO:0000250" key="1"/>
<evidence type="ECO:0000255" key="2">
    <source>
        <dbReference type="HAMAP-Rule" id="MF_00358"/>
    </source>
</evidence>
<evidence type="ECO:0000256" key="3">
    <source>
        <dbReference type="SAM" id="MobiDB-lite"/>
    </source>
</evidence>
<evidence type="ECO:0000305" key="4"/>
<reference key="1">
    <citation type="journal article" date="2006" name="J. Bacteriol.">
        <title>Complete genome sequence of Yersinia pestis strains Antiqua and Nepal516: evidence of gene reduction in an emerging pathogen.</title>
        <authorList>
            <person name="Chain P.S.G."/>
            <person name="Hu P."/>
            <person name="Malfatti S.A."/>
            <person name="Radnedge L."/>
            <person name="Larimer F."/>
            <person name="Vergez L.M."/>
            <person name="Worsham P."/>
            <person name="Chu M.C."/>
            <person name="Andersen G.L."/>
        </authorList>
    </citation>
    <scope>NUCLEOTIDE SEQUENCE [LARGE SCALE GENOMIC DNA]</scope>
    <source>
        <strain>Antiqua</strain>
    </source>
</reference>
<sequence length="71" mass="8500">MPVIKVRENEPFDVALRRFKRSCEKAGVLAEVRRREFYEKPTTERKRAKASAVKRHAKKLARENARRTRLY</sequence>
<accession>Q1C365</accession>
<protein>
    <recommendedName>
        <fullName evidence="2">Small ribosomal subunit protein bS21</fullName>
    </recommendedName>
    <alternativeName>
        <fullName evidence="4">30S ribosomal protein S21</fullName>
    </alternativeName>
</protein>
<dbReference type="EMBL" id="CP000308">
    <property type="protein sequence ID" value="ABG15107.1"/>
    <property type="molecule type" value="Genomic_DNA"/>
</dbReference>
<dbReference type="RefSeq" id="WP_001144069.1">
    <property type="nucleotide sequence ID" value="NZ_CP009906.1"/>
</dbReference>
<dbReference type="SMR" id="Q1C365"/>
<dbReference type="GeneID" id="98390195"/>
<dbReference type="KEGG" id="ypa:YPA_3145"/>
<dbReference type="Proteomes" id="UP000001971">
    <property type="component" value="Chromosome"/>
</dbReference>
<dbReference type="GO" id="GO:1990904">
    <property type="term" value="C:ribonucleoprotein complex"/>
    <property type="evidence" value="ECO:0007669"/>
    <property type="project" value="UniProtKB-KW"/>
</dbReference>
<dbReference type="GO" id="GO:0005840">
    <property type="term" value="C:ribosome"/>
    <property type="evidence" value="ECO:0007669"/>
    <property type="project" value="UniProtKB-KW"/>
</dbReference>
<dbReference type="GO" id="GO:0003735">
    <property type="term" value="F:structural constituent of ribosome"/>
    <property type="evidence" value="ECO:0007669"/>
    <property type="project" value="InterPro"/>
</dbReference>
<dbReference type="GO" id="GO:0006412">
    <property type="term" value="P:translation"/>
    <property type="evidence" value="ECO:0007669"/>
    <property type="project" value="UniProtKB-UniRule"/>
</dbReference>
<dbReference type="FunFam" id="1.20.5.1150:FF:000001">
    <property type="entry name" value="30S ribosomal protein S21"/>
    <property type="match status" value="1"/>
</dbReference>
<dbReference type="Gene3D" id="1.20.5.1150">
    <property type="entry name" value="Ribosomal protein S8"/>
    <property type="match status" value="1"/>
</dbReference>
<dbReference type="HAMAP" id="MF_00358">
    <property type="entry name" value="Ribosomal_bS21"/>
    <property type="match status" value="1"/>
</dbReference>
<dbReference type="InterPro" id="IPR001911">
    <property type="entry name" value="Ribosomal_bS21"/>
</dbReference>
<dbReference type="InterPro" id="IPR018278">
    <property type="entry name" value="Ribosomal_bS21_CS"/>
</dbReference>
<dbReference type="InterPro" id="IPR038380">
    <property type="entry name" value="Ribosomal_bS21_sf"/>
</dbReference>
<dbReference type="NCBIfam" id="TIGR00030">
    <property type="entry name" value="S21p"/>
    <property type="match status" value="1"/>
</dbReference>
<dbReference type="PANTHER" id="PTHR21109">
    <property type="entry name" value="MITOCHONDRIAL 28S RIBOSOMAL PROTEIN S21"/>
    <property type="match status" value="1"/>
</dbReference>
<dbReference type="PANTHER" id="PTHR21109:SF22">
    <property type="entry name" value="SMALL RIBOSOMAL SUBUNIT PROTEIN BS21"/>
    <property type="match status" value="1"/>
</dbReference>
<dbReference type="Pfam" id="PF01165">
    <property type="entry name" value="Ribosomal_S21"/>
    <property type="match status" value="1"/>
</dbReference>
<dbReference type="PRINTS" id="PR00976">
    <property type="entry name" value="RIBOSOMALS21"/>
</dbReference>
<dbReference type="PROSITE" id="PS01181">
    <property type="entry name" value="RIBOSOMAL_S21"/>
    <property type="match status" value="1"/>
</dbReference>
<keyword id="KW-0687">Ribonucleoprotein</keyword>
<keyword id="KW-0689">Ribosomal protein</keyword>
<gene>
    <name evidence="2" type="primary">rpsU</name>
    <name type="ordered locus">YPA_3145</name>
</gene>
<proteinExistence type="inferred from homology"/>
<organism>
    <name type="scientific">Yersinia pestis bv. Antiqua (strain Antiqua)</name>
    <dbReference type="NCBI Taxonomy" id="360102"/>
    <lineage>
        <taxon>Bacteria</taxon>
        <taxon>Pseudomonadati</taxon>
        <taxon>Pseudomonadota</taxon>
        <taxon>Gammaproteobacteria</taxon>
        <taxon>Enterobacterales</taxon>
        <taxon>Yersiniaceae</taxon>
        <taxon>Yersinia</taxon>
    </lineage>
</organism>
<name>RS21_YERPA</name>
<comment type="similarity">
    <text evidence="2">Belongs to the bacterial ribosomal protein bS21 family.</text>
</comment>
<feature type="initiator methionine" description="Removed" evidence="1">
    <location>
        <position position="1"/>
    </location>
</feature>
<feature type="chain" id="PRO_0000266801" description="Small ribosomal subunit protein bS21">
    <location>
        <begin position="2"/>
        <end position="71"/>
    </location>
</feature>
<feature type="region of interest" description="Disordered" evidence="3">
    <location>
        <begin position="43"/>
        <end position="71"/>
    </location>
</feature>
<feature type="compositionally biased region" description="Basic residues" evidence="3">
    <location>
        <begin position="46"/>
        <end position="59"/>
    </location>
</feature>
<feature type="compositionally biased region" description="Basic and acidic residues" evidence="3">
    <location>
        <begin position="60"/>
        <end position="71"/>
    </location>
</feature>